<evidence type="ECO:0000255" key="1">
    <source>
        <dbReference type="PROSITE-ProRule" id="PRU00340"/>
    </source>
</evidence>
<evidence type="ECO:0000269" key="2">
    <source>
    </source>
</evidence>
<evidence type="ECO:0000269" key="3">
    <source>
    </source>
</evidence>
<gene>
    <name type="ordered locus">Rv2034</name>
</gene>
<accession>O53478</accession>
<accession>L0T8F6</accession>
<proteinExistence type="evidence at protein level"/>
<reference key="1">
    <citation type="journal article" date="1998" name="Nature">
        <title>Deciphering the biology of Mycobacterium tuberculosis from the complete genome sequence.</title>
        <authorList>
            <person name="Cole S.T."/>
            <person name="Brosch R."/>
            <person name="Parkhill J."/>
            <person name="Garnier T."/>
            <person name="Churcher C.M."/>
            <person name="Harris D.E."/>
            <person name="Gordon S.V."/>
            <person name="Eiglmeier K."/>
            <person name="Gas S."/>
            <person name="Barry C.E. III"/>
            <person name="Tekaia F."/>
            <person name="Badcock K."/>
            <person name="Basham D."/>
            <person name="Brown D."/>
            <person name="Chillingworth T."/>
            <person name="Connor R."/>
            <person name="Davies R.M."/>
            <person name="Devlin K."/>
            <person name="Feltwell T."/>
            <person name="Gentles S."/>
            <person name="Hamlin N."/>
            <person name="Holroyd S."/>
            <person name="Hornsby T."/>
            <person name="Jagels K."/>
            <person name="Krogh A."/>
            <person name="McLean J."/>
            <person name="Moule S."/>
            <person name="Murphy L.D."/>
            <person name="Oliver S."/>
            <person name="Osborne J."/>
            <person name="Quail M.A."/>
            <person name="Rajandream M.A."/>
            <person name="Rogers J."/>
            <person name="Rutter S."/>
            <person name="Seeger K."/>
            <person name="Skelton S."/>
            <person name="Squares S."/>
            <person name="Squares R."/>
            <person name="Sulston J.E."/>
            <person name="Taylor K."/>
            <person name="Whitehead S."/>
            <person name="Barrell B.G."/>
        </authorList>
    </citation>
    <scope>NUCLEOTIDE SEQUENCE [LARGE SCALE GENOMIC DNA]</scope>
    <source>
        <strain>ATCC 25618 / H37Rv</strain>
    </source>
</reference>
<reference key="2">
    <citation type="journal article" date="2011" name="Biochem. Biophys. Res. Commun.">
        <title>An ArsR-like transcriptional factor recognizes a conserved sequence motif and positively regulates the expression of phoP in mycobacteria.</title>
        <authorList>
            <person name="Gao C.H."/>
            <person name="Yang M."/>
            <person name="He Z.G."/>
        </authorList>
    </citation>
    <scope>FUNCTION</scope>
    <scope>DNA-BINDING</scope>
</reference>
<reference key="3">
    <citation type="journal article" date="2012" name="PLoS ONE">
        <title>Characterization of a novel ArsR-like regulator encoded by Rv2034 in Mycobacterium tuberculosis.</title>
        <authorList>
            <person name="Gao C.H."/>
            <person name="Yang M."/>
            <person name="He Z.G."/>
        </authorList>
    </citation>
    <scope>FUNCTION</scope>
    <scope>DNA-BINDING</scope>
    <scope>ACTIVITY REGULATION</scope>
    <scope>SUBUNIT</scope>
    <scope>INDUCTION</scope>
    <scope>MUTAGENESIS OF ALA-32; GLU-35 AND CYS-61</scope>
</reference>
<sequence length="107" mass="11856">MSTYRSPDRAWQALADGTRRAIVERLAHGPLAVGELARDLPVSRPAVSQHLKVLKTARLVCDRPAGTRRVYQLDPTGLAALRTDLDRFWTRALTGYAQLIDSEGDDT</sequence>
<keyword id="KW-0010">Activator</keyword>
<keyword id="KW-0238">DNA-binding</keyword>
<keyword id="KW-1185">Reference proteome</keyword>
<keyword id="KW-0678">Repressor</keyword>
<keyword id="KW-0804">Transcription</keyword>
<keyword id="KW-0805">Transcription regulation</keyword>
<comment type="function">
    <text evidence="2 3">Involved in the regulation of lipid metabolism and hypoxic response. Positively regulates transcription of various genes, such as phoP, groEL2 and dosR. Negatively regulates its own transcription. Acts by binding to a specific palindromic sequence motif in promoter regions.</text>
</comment>
<comment type="activity regulation">
    <text evidence="3">DNA-binding ability is not susceptible to zinc, nickel, cobalt, cadmium, lead, copper and manganese ions.</text>
</comment>
<comment type="subunit">
    <text evidence="3">Homodimer.</text>
</comment>
<comment type="induction">
    <text evidence="3">Negatively autoregulated.</text>
</comment>
<name>HTHAR_MYCTU</name>
<organism>
    <name type="scientific">Mycobacterium tuberculosis (strain ATCC 25618 / H37Rv)</name>
    <dbReference type="NCBI Taxonomy" id="83332"/>
    <lineage>
        <taxon>Bacteria</taxon>
        <taxon>Bacillati</taxon>
        <taxon>Actinomycetota</taxon>
        <taxon>Actinomycetes</taxon>
        <taxon>Mycobacteriales</taxon>
        <taxon>Mycobacteriaceae</taxon>
        <taxon>Mycobacterium</taxon>
        <taxon>Mycobacterium tuberculosis complex</taxon>
    </lineage>
</organism>
<feature type="chain" id="PRO_0000419177" description="HTH-type transcriptional regulator Rv2034">
    <location>
        <begin position="1"/>
        <end position="107"/>
    </location>
</feature>
<feature type="domain" description="HTH arsR-type" evidence="1">
    <location>
        <begin position="1"/>
        <end position="93"/>
    </location>
</feature>
<feature type="DNA-binding region" description="H-T-H motif" evidence="1">
    <location>
        <begin position="33"/>
        <end position="56"/>
    </location>
</feature>
<feature type="mutagenesis site" description="Does not bind DNA, but retains the capacity to form dimers; when associated with G-35." evidence="3">
    <original>A</original>
    <variation>G</variation>
    <location>
        <position position="32"/>
    </location>
</feature>
<feature type="mutagenesis site" description="Does not bind DNA, but retains the capacity to form dimers; when associated with G-32." evidence="3">
    <original>E</original>
    <variation>G</variation>
    <location>
        <position position="35"/>
    </location>
</feature>
<feature type="mutagenesis site" description="Does not bind DNA and does not form dimers." evidence="3">
    <original>C</original>
    <variation>A</variation>
    <location>
        <position position="61"/>
    </location>
</feature>
<protein>
    <recommendedName>
        <fullName>HTH-type transcriptional regulator Rv2034</fullName>
    </recommendedName>
</protein>
<dbReference type="EMBL" id="AL123456">
    <property type="protein sequence ID" value="CCP44807.1"/>
    <property type="molecule type" value="Genomic_DNA"/>
</dbReference>
<dbReference type="PIR" id="A70943">
    <property type="entry name" value="A70943"/>
</dbReference>
<dbReference type="RefSeq" id="NP_216550.1">
    <property type="nucleotide sequence ID" value="NC_000962.3"/>
</dbReference>
<dbReference type="RefSeq" id="WP_003410200.1">
    <property type="nucleotide sequence ID" value="NZ_NVQJ01000046.1"/>
</dbReference>
<dbReference type="SMR" id="O53478"/>
<dbReference type="STRING" id="83332.Rv2034"/>
<dbReference type="PaxDb" id="83332-Rv2034"/>
<dbReference type="DNASU" id="887859"/>
<dbReference type="GeneID" id="887859"/>
<dbReference type="KEGG" id="mtu:Rv2034"/>
<dbReference type="KEGG" id="mtv:RVBD_2034"/>
<dbReference type="TubercuList" id="Rv2034"/>
<dbReference type="eggNOG" id="COG0640">
    <property type="taxonomic scope" value="Bacteria"/>
</dbReference>
<dbReference type="InParanoid" id="O53478"/>
<dbReference type="OrthoDB" id="3628603at2"/>
<dbReference type="PhylomeDB" id="O53478"/>
<dbReference type="Proteomes" id="UP000001584">
    <property type="component" value="Chromosome"/>
</dbReference>
<dbReference type="GO" id="GO:0003677">
    <property type="term" value="F:DNA binding"/>
    <property type="evidence" value="ECO:0000314"/>
    <property type="project" value="MTBBASE"/>
</dbReference>
<dbReference type="GO" id="GO:0003700">
    <property type="term" value="F:DNA-binding transcription factor activity"/>
    <property type="evidence" value="ECO:0007669"/>
    <property type="project" value="InterPro"/>
</dbReference>
<dbReference type="GO" id="GO:0006355">
    <property type="term" value="P:regulation of DNA-templated transcription"/>
    <property type="evidence" value="ECO:0000318"/>
    <property type="project" value="GO_Central"/>
</dbReference>
<dbReference type="CDD" id="cd00090">
    <property type="entry name" value="HTH_ARSR"/>
    <property type="match status" value="1"/>
</dbReference>
<dbReference type="FunFam" id="1.10.10.10:FF:000496">
    <property type="entry name" value="ArsR family transcriptional regulator"/>
    <property type="match status" value="1"/>
</dbReference>
<dbReference type="Gene3D" id="1.10.10.10">
    <property type="entry name" value="Winged helix-like DNA-binding domain superfamily/Winged helix DNA-binding domain"/>
    <property type="match status" value="1"/>
</dbReference>
<dbReference type="InterPro" id="IPR011991">
    <property type="entry name" value="ArsR-like_HTH"/>
</dbReference>
<dbReference type="InterPro" id="IPR001845">
    <property type="entry name" value="HTH_ArsR_DNA-bd_dom"/>
</dbReference>
<dbReference type="InterPro" id="IPR051081">
    <property type="entry name" value="HTH_MetalResp_TranReg"/>
</dbReference>
<dbReference type="InterPro" id="IPR036388">
    <property type="entry name" value="WH-like_DNA-bd_sf"/>
</dbReference>
<dbReference type="InterPro" id="IPR036390">
    <property type="entry name" value="WH_DNA-bd_sf"/>
</dbReference>
<dbReference type="NCBIfam" id="NF033788">
    <property type="entry name" value="HTH_metalloreg"/>
    <property type="match status" value="1"/>
</dbReference>
<dbReference type="PANTHER" id="PTHR33154">
    <property type="entry name" value="TRANSCRIPTIONAL REGULATOR, ARSR FAMILY"/>
    <property type="match status" value="1"/>
</dbReference>
<dbReference type="PANTHER" id="PTHR33154:SF33">
    <property type="entry name" value="TRANSCRIPTIONAL REPRESSOR SDPR"/>
    <property type="match status" value="1"/>
</dbReference>
<dbReference type="Pfam" id="PF01022">
    <property type="entry name" value="HTH_5"/>
    <property type="match status" value="1"/>
</dbReference>
<dbReference type="PRINTS" id="PR00778">
    <property type="entry name" value="HTHARSR"/>
</dbReference>
<dbReference type="SMART" id="SM00418">
    <property type="entry name" value="HTH_ARSR"/>
    <property type="match status" value="1"/>
</dbReference>
<dbReference type="SUPFAM" id="SSF46785">
    <property type="entry name" value="Winged helix' DNA-binding domain"/>
    <property type="match status" value="1"/>
</dbReference>
<dbReference type="PROSITE" id="PS50987">
    <property type="entry name" value="HTH_ARSR_2"/>
    <property type="match status" value="1"/>
</dbReference>